<gene>
    <name type="primary">sdhC</name>
</gene>
<accession>Q59659</accession>
<evidence type="ECO:0000250" key="1"/>
<evidence type="ECO:0000305" key="2"/>
<sequence>MADVNRGNRPLSPHLQVYRLPLAAITSIMTRITGHALVAGIVLITWWLVAAVTSPGAFACADWVVRSWLGFIILTGSMWALWYHLLAGLRHLFYDAGYGLEIEQAHKSSQALIAGSVVLAVLTLIVFFVF</sequence>
<comment type="function">
    <text evidence="1">Membrane-anchoring subunit of succinate dehydrogenase (SDH).</text>
</comment>
<comment type="cofactor">
    <cofactor evidence="1">
        <name>heme</name>
        <dbReference type="ChEBI" id="CHEBI:30413"/>
    </cofactor>
    <text evidence="1">The heme is bound between the two transmembrane subunits.</text>
</comment>
<comment type="pathway">
    <text>Carbohydrate metabolism; tricarboxylic acid cycle.</text>
</comment>
<comment type="subunit">
    <text evidence="1">Part of an enzyme complex containing four subunits: a flavoprotein, an iron-sulfur protein, plus two membrane-anchoring proteins, SdhC and SdhD. The complex can form homotrimers (By similarity).</text>
</comment>
<comment type="subcellular location">
    <subcellularLocation>
        <location>Cell inner membrane</location>
        <topology>Multi-pass membrane protein</topology>
    </subcellularLocation>
</comment>
<comment type="similarity">
    <text evidence="2">Belongs to the cytochrome b560 family.</text>
</comment>
<feature type="chain" id="PRO_0000203512" description="Succinate dehydrogenase cytochrome b556 subunit">
    <location>
        <begin position="1"/>
        <end position="130"/>
    </location>
</feature>
<feature type="topological domain" description="Cytoplasmic" evidence="1">
    <location>
        <begin position="1"/>
        <end position="26"/>
    </location>
</feature>
<feature type="transmembrane region" description="Helical" evidence="1">
    <location>
        <begin position="27"/>
        <end position="52"/>
    </location>
</feature>
<feature type="topological domain" description="Periplasmic" evidence="1">
    <location>
        <begin position="53"/>
        <end position="68"/>
    </location>
</feature>
<feature type="transmembrane region" description="Helical" evidence="1">
    <location>
        <begin position="69"/>
        <end position="89"/>
    </location>
</feature>
<feature type="topological domain" description="Cytoplasmic" evidence="1">
    <location>
        <begin position="90"/>
        <end position="109"/>
    </location>
</feature>
<feature type="transmembrane region" description="Helical" evidence="1">
    <location>
        <begin position="110"/>
        <end position="130"/>
    </location>
</feature>
<feature type="binding site" description="axial binding residue" evidence="1">
    <location>
        <position position="84"/>
    </location>
    <ligand>
        <name>heme</name>
        <dbReference type="ChEBI" id="CHEBI:30413"/>
        <note>ligand shared with second transmembrane subunit</note>
    </ligand>
    <ligandPart>
        <name>Fe</name>
        <dbReference type="ChEBI" id="CHEBI:18248"/>
    </ligandPart>
</feature>
<keyword id="KW-0997">Cell inner membrane</keyword>
<keyword id="KW-1003">Cell membrane</keyword>
<keyword id="KW-0249">Electron transport</keyword>
<keyword id="KW-0349">Heme</keyword>
<keyword id="KW-0408">Iron</keyword>
<keyword id="KW-0472">Membrane</keyword>
<keyword id="KW-0479">Metal-binding</keyword>
<keyword id="KW-0812">Transmembrane</keyword>
<keyword id="KW-1133">Transmembrane helix</keyword>
<keyword id="KW-0813">Transport</keyword>
<keyword id="KW-0816">Tricarboxylic acid cycle</keyword>
<dbReference type="EMBL" id="U31902">
    <property type="protein sequence ID" value="AAA75175.1"/>
    <property type="molecule type" value="Genomic_DNA"/>
</dbReference>
<dbReference type="PIR" id="T46878">
    <property type="entry name" value="T46878"/>
</dbReference>
<dbReference type="RefSeq" id="WP_011746912.1">
    <property type="nucleotide sequence ID" value="NZ_PPGA01000002.1"/>
</dbReference>
<dbReference type="SMR" id="Q59659"/>
<dbReference type="GeneID" id="93451792"/>
<dbReference type="OMA" id="YHLVAGI"/>
<dbReference type="UniPathway" id="UPA00223"/>
<dbReference type="GO" id="GO:0005886">
    <property type="term" value="C:plasma membrane"/>
    <property type="evidence" value="ECO:0007669"/>
    <property type="project" value="UniProtKB-SubCell"/>
</dbReference>
<dbReference type="GO" id="GO:0009055">
    <property type="term" value="F:electron transfer activity"/>
    <property type="evidence" value="ECO:0007669"/>
    <property type="project" value="InterPro"/>
</dbReference>
<dbReference type="GO" id="GO:0046872">
    <property type="term" value="F:metal ion binding"/>
    <property type="evidence" value="ECO:0007669"/>
    <property type="project" value="UniProtKB-KW"/>
</dbReference>
<dbReference type="GO" id="GO:0006099">
    <property type="term" value="P:tricarboxylic acid cycle"/>
    <property type="evidence" value="ECO:0007669"/>
    <property type="project" value="UniProtKB-UniPathway"/>
</dbReference>
<dbReference type="CDD" id="cd03499">
    <property type="entry name" value="SQR_TypeC_SdhC"/>
    <property type="match status" value="1"/>
</dbReference>
<dbReference type="Gene3D" id="1.20.1300.10">
    <property type="entry name" value="Fumarate reductase/succinate dehydrogenase, transmembrane subunit"/>
    <property type="match status" value="1"/>
</dbReference>
<dbReference type="InterPro" id="IPR034804">
    <property type="entry name" value="SQR/QFR_C/D"/>
</dbReference>
<dbReference type="InterPro" id="IPR018495">
    <property type="entry name" value="Succ_DH_cyt_bsu_CS"/>
</dbReference>
<dbReference type="InterPro" id="IPR014314">
    <property type="entry name" value="Succ_DH_cytb556"/>
</dbReference>
<dbReference type="InterPro" id="IPR000701">
    <property type="entry name" value="SuccDH_FuR_B_TM-su"/>
</dbReference>
<dbReference type="NCBIfam" id="TIGR02970">
    <property type="entry name" value="succ_dehyd_cytB"/>
    <property type="match status" value="1"/>
</dbReference>
<dbReference type="PANTHER" id="PTHR10978">
    <property type="entry name" value="SUCCINATE DEHYDROGENASE CYTOCHROME B560 SUBUNIT"/>
    <property type="match status" value="1"/>
</dbReference>
<dbReference type="PANTHER" id="PTHR10978:SF5">
    <property type="entry name" value="SUCCINATE DEHYDROGENASE CYTOCHROME B560 SUBUNIT, MITOCHONDRIAL"/>
    <property type="match status" value="1"/>
</dbReference>
<dbReference type="Pfam" id="PF01127">
    <property type="entry name" value="Sdh_cyt"/>
    <property type="match status" value="1"/>
</dbReference>
<dbReference type="PIRSF" id="PIRSF000178">
    <property type="entry name" value="SDH_cyt_b560"/>
    <property type="match status" value="1"/>
</dbReference>
<dbReference type="SUPFAM" id="SSF81343">
    <property type="entry name" value="Fumarate reductase respiratory complex transmembrane subunits"/>
    <property type="match status" value="1"/>
</dbReference>
<dbReference type="PROSITE" id="PS01001">
    <property type="entry name" value="SDH_CYT_2"/>
    <property type="match status" value="1"/>
</dbReference>
<proteinExistence type="inferred from homology"/>
<reference key="1">
    <citation type="submission" date="1995-09" db="EMBL/GenBank/DDBJ databases">
        <title>Cloning, sequencing, and expression of the succinate-ubiquinone oxidoreductase (SdhCDAB) operon from Paracoccus denitrificans.</title>
        <authorList>
            <person name="Dickins M.A."/>
            <person name="Dhawan T."/>
            <person name="Gunsalus R.P."/>
            <person name="Schroeder I."/>
            <person name="Cecchini G."/>
        </authorList>
    </citation>
    <scope>NUCLEOTIDE SEQUENCE [GENOMIC DNA]</scope>
    <source>
        <strain>ATCC 13543 / NRRL B-3784 / NRC 449</strain>
    </source>
</reference>
<protein>
    <recommendedName>
        <fullName>Succinate dehydrogenase cytochrome b556 subunit</fullName>
        <shortName>Cytochrome b-556</shortName>
    </recommendedName>
</protein>
<name>DHSC_PARDE</name>
<organism>
    <name type="scientific">Paracoccus denitrificans</name>
    <dbReference type="NCBI Taxonomy" id="266"/>
    <lineage>
        <taxon>Bacteria</taxon>
        <taxon>Pseudomonadati</taxon>
        <taxon>Pseudomonadota</taxon>
        <taxon>Alphaproteobacteria</taxon>
        <taxon>Rhodobacterales</taxon>
        <taxon>Paracoccaceae</taxon>
        <taxon>Paracoccus</taxon>
    </lineage>
</organism>